<protein>
    <recommendedName>
        <fullName>Acetylcholine receptor subunit delta</fullName>
    </recommendedName>
</protein>
<dbReference type="EMBL" id="J00965">
    <property type="protein sequence ID" value="AAA49275.1"/>
    <property type="molecule type" value="mRNA"/>
</dbReference>
<dbReference type="PIR" id="A03177">
    <property type="entry name" value="ACRYD1"/>
</dbReference>
<dbReference type="PDB" id="1EQ8">
    <property type="method" value="NMR"/>
    <property type="chains" value="A/B/C/D/E=276-298"/>
</dbReference>
<dbReference type="PDB" id="1OED">
    <property type="method" value="EM"/>
    <property type="resolution" value="4.00 A"/>
    <property type="chains" value="C=246-505"/>
</dbReference>
<dbReference type="PDB" id="6UWZ">
    <property type="method" value="EM"/>
    <property type="resolution" value="2.69 A"/>
    <property type="chains" value="B=22-522"/>
</dbReference>
<dbReference type="PDB" id="7QKO">
    <property type="method" value="EM"/>
    <property type="resolution" value="2.90 A"/>
    <property type="chains" value="C=22-522"/>
</dbReference>
<dbReference type="PDB" id="7QL5">
    <property type="method" value="EM"/>
    <property type="resolution" value="2.50 A"/>
    <property type="chains" value="C=22-522"/>
</dbReference>
<dbReference type="PDB" id="7QL6">
    <property type="method" value="EM"/>
    <property type="resolution" value="3.23 A"/>
    <property type="chains" value="C=22-522"/>
</dbReference>
<dbReference type="PDB" id="7SMM">
    <property type="method" value="EM"/>
    <property type="resolution" value="2.50 A"/>
    <property type="chains" value="B=22-522"/>
</dbReference>
<dbReference type="PDB" id="7SMQ">
    <property type="method" value="EM"/>
    <property type="resolution" value="2.70 A"/>
    <property type="chains" value="B=22-522"/>
</dbReference>
<dbReference type="PDB" id="7SMR">
    <property type="method" value="EM"/>
    <property type="resolution" value="2.77 A"/>
    <property type="chains" value="B=22-522"/>
</dbReference>
<dbReference type="PDB" id="7SMS">
    <property type="method" value="EM"/>
    <property type="resolution" value="3.18 A"/>
    <property type="chains" value="B=22-522"/>
</dbReference>
<dbReference type="PDB" id="7SMT">
    <property type="method" value="EM"/>
    <property type="resolution" value="2.56 A"/>
    <property type="chains" value="B=22-522"/>
</dbReference>
<dbReference type="PDB" id="7Z14">
    <property type="method" value="EM"/>
    <property type="resolution" value="3.15 A"/>
    <property type="chains" value="C=22-522"/>
</dbReference>
<dbReference type="PDB" id="8ESK">
    <property type="method" value="EM"/>
    <property type="resolution" value="2.90 A"/>
    <property type="chains" value="B=22-522"/>
</dbReference>
<dbReference type="PDB" id="8F2S">
    <property type="method" value="EM"/>
    <property type="resolution" value="2.90 A"/>
    <property type="chains" value="B=22-521"/>
</dbReference>
<dbReference type="PDB" id="8F6Y">
    <property type="method" value="EM"/>
    <property type="resolution" value="2.79 A"/>
    <property type="chains" value="B=22-521"/>
</dbReference>
<dbReference type="PDB" id="8F6Z">
    <property type="method" value="EM"/>
    <property type="resolution" value="2.70 A"/>
    <property type="chains" value="B=22-521"/>
</dbReference>
<dbReference type="PDB" id="8QQM">
    <property type="method" value="EM"/>
    <property type="resolution" value="4.70 A"/>
    <property type="chains" value="B=22-522"/>
</dbReference>
<dbReference type="PDBsum" id="1EQ8"/>
<dbReference type="PDBsum" id="1OED"/>
<dbReference type="PDBsum" id="6UWZ"/>
<dbReference type="PDBsum" id="7QKO"/>
<dbReference type="PDBsum" id="7QL5"/>
<dbReference type="PDBsum" id="7QL6"/>
<dbReference type="PDBsum" id="7SMM"/>
<dbReference type="PDBsum" id="7SMQ"/>
<dbReference type="PDBsum" id="7SMR"/>
<dbReference type="PDBsum" id="7SMS"/>
<dbReference type="PDBsum" id="7SMT"/>
<dbReference type="PDBsum" id="7Z14"/>
<dbReference type="PDBsum" id="8ESK"/>
<dbReference type="PDBsum" id="8F2S"/>
<dbReference type="PDBsum" id="8F6Y"/>
<dbReference type="PDBsum" id="8F6Z"/>
<dbReference type="PDBsum" id="8QQM"/>
<dbReference type="EMDB" id="EMD-14048"/>
<dbReference type="EMDB" id="EMD-14064"/>
<dbReference type="EMDB" id="EMD-14065"/>
<dbReference type="EMDB" id="EMD-14440"/>
<dbReference type="EMDB" id="EMD-18596"/>
<dbReference type="EMDB" id="EMD-20928"/>
<dbReference type="EMDB" id="EMD-25202"/>
<dbReference type="EMDB" id="EMD-25205"/>
<dbReference type="EMDB" id="EMD-25206"/>
<dbReference type="EMDB" id="EMD-25207"/>
<dbReference type="EMDB" id="EMD-25208"/>
<dbReference type="EMDB" id="EMD-28576"/>
<dbReference type="EMDB" id="EMD-28826"/>
<dbReference type="EMDB" id="EMD-28892"/>
<dbReference type="EMDB" id="EMD-28893"/>
<dbReference type="SMR" id="P02718"/>
<dbReference type="ComplexPortal" id="CPX-2187">
    <property type="entry name" value="Acetylcholine receptor, alpha1-beta1-gamma-delta"/>
</dbReference>
<dbReference type="ELM" id="P02718"/>
<dbReference type="IntAct" id="P02718">
    <property type="interactions" value="3"/>
</dbReference>
<dbReference type="MINT" id="P02718"/>
<dbReference type="BindingDB" id="P02718"/>
<dbReference type="ChEMBL" id="CHEMBL3916"/>
<dbReference type="DrugCentral" id="P02718"/>
<dbReference type="TCDB" id="1.A.9.1.9">
    <property type="family name" value="the neurotransmitter receptor, cys loop, ligand-gated ion channel (lic) family"/>
</dbReference>
<dbReference type="GlyConnect" id="7">
    <property type="glycosylation" value="35 N-Linked glycans"/>
</dbReference>
<dbReference type="GlyCosmos" id="P02718">
    <property type="glycosylation" value="3 sites, 66 glycans"/>
</dbReference>
<dbReference type="iPTMnet" id="P02718"/>
<dbReference type="SwissPalm" id="P02718"/>
<dbReference type="EvolutionaryTrace" id="P02718"/>
<dbReference type="GO" id="GO:0045211">
    <property type="term" value="C:postsynaptic membrane"/>
    <property type="evidence" value="ECO:0007669"/>
    <property type="project" value="UniProtKB-SubCell"/>
</dbReference>
<dbReference type="GO" id="GO:0022848">
    <property type="term" value="F:acetylcholine-gated monoatomic cation-selective channel activity"/>
    <property type="evidence" value="ECO:0007669"/>
    <property type="project" value="InterPro"/>
</dbReference>
<dbReference type="GO" id="GO:0004888">
    <property type="term" value="F:transmembrane signaling receptor activity"/>
    <property type="evidence" value="ECO:0007669"/>
    <property type="project" value="InterPro"/>
</dbReference>
<dbReference type="CDD" id="cd19028">
    <property type="entry name" value="LGIC_ECD_nAChR_D"/>
    <property type="match status" value="1"/>
</dbReference>
<dbReference type="CDD" id="cd19064">
    <property type="entry name" value="LGIC_TM_nAChR"/>
    <property type="match status" value="1"/>
</dbReference>
<dbReference type="FunFam" id="2.70.170.10:FF:000012">
    <property type="entry name" value="Nicotinic acetylcholine receptor subunit gamma"/>
    <property type="match status" value="1"/>
</dbReference>
<dbReference type="Gene3D" id="2.70.170.10">
    <property type="entry name" value="Neurotransmitter-gated ion-channel ligand-binding domain"/>
    <property type="match status" value="1"/>
</dbReference>
<dbReference type="Gene3D" id="1.20.58.390">
    <property type="entry name" value="Neurotransmitter-gated ion-channel transmembrane domain"/>
    <property type="match status" value="2"/>
</dbReference>
<dbReference type="InterPro" id="IPR006202">
    <property type="entry name" value="Neur_chan_lig-bd"/>
</dbReference>
<dbReference type="InterPro" id="IPR036734">
    <property type="entry name" value="Neur_chan_lig-bd_sf"/>
</dbReference>
<dbReference type="InterPro" id="IPR006201">
    <property type="entry name" value="Neur_channel"/>
</dbReference>
<dbReference type="InterPro" id="IPR036719">
    <property type="entry name" value="Neuro-gated_channel_TM_sf"/>
</dbReference>
<dbReference type="InterPro" id="IPR038050">
    <property type="entry name" value="Neuro_actylchol_rec"/>
</dbReference>
<dbReference type="InterPro" id="IPR006029">
    <property type="entry name" value="Neurotrans-gated_channel_TM"/>
</dbReference>
<dbReference type="InterPro" id="IPR018000">
    <property type="entry name" value="Neurotransmitter_ion_chnl_CS"/>
</dbReference>
<dbReference type="InterPro" id="IPR002394">
    <property type="entry name" value="Nicotinic_acetylcholine_rcpt"/>
</dbReference>
<dbReference type="NCBIfam" id="TIGR00860">
    <property type="entry name" value="LIC"/>
    <property type="match status" value="1"/>
</dbReference>
<dbReference type="PANTHER" id="PTHR18945">
    <property type="entry name" value="NEUROTRANSMITTER GATED ION CHANNEL"/>
    <property type="match status" value="1"/>
</dbReference>
<dbReference type="Pfam" id="PF02931">
    <property type="entry name" value="Neur_chan_LBD"/>
    <property type="match status" value="1"/>
</dbReference>
<dbReference type="Pfam" id="PF02932">
    <property type="entry name" value="Neur_chan_memb"/>
    <property type="match status" value="1"/>
</dbReference>
<dbReference type="PRINTS" id="PR00254">
    <property type="entry name" value="NICOTINICR"/>
</dbReference>
<dbReference type="PRINTS" id="PR00252">
    <property type="entry name" value="NRIONCHANNEL"/>
</dbReference>
<dbReference type="SUPFAM" id="SSF90112">
    <property type="entry name" value="Neurotransmitter-gated ion-channel transmembrane pore"/>
    <property type="match status" value="1"/>
</dbReference>
<dbReference type="SUPFAM" id="SSF63712">
    <property type="entry name" value="Nicotinic receptor ligand binding domain-like"/>
    <property type="match status" value="1"/>
</dbReference>
<dbReference type="PROSITE" id="PS00236">
    <property type="entry name" value="NEUROTR_ION_CHANNEL"/>
    <property type="match status" value="1"/>
</dbReference>
<feature type="signal peptide">
    <location>
        <begin position="1"/>
        <end position="21"/>
    </location>
</feature>
<feature type="chain" id="PRO_0000000326" description="Acetylcholine receptor subunit delta">
    <location>
        <begin position="22"/>
        <end position="522"/>
    </location>
</feature>
<feature type="topological domain" description="Extracellular">
    <location>
        <begin position="22"/>
        <end position="245"/>
    </location>
</feature>
<feature type="transmembrane region" description="Helical">
    <location>
        <begin position="246"/>
        <end position="270"/>
    </location>
</feature>
<feature type="transmembrane region" description="Helical">
    <location>
        <begin position="278"/>
        <end position="295"/>
    </location>
</feature>
<feature type="transmembrane region" description="Helical">
    <location>
        <begin position="312"/>
        <end position="333"/>
    </location>
</feature>
<feature type="topological domain" description="Cytoplasmic">
    <location>
        <begin position="334"/>
        <end position="476"/>
    </location>
</feature>
<feature type="transmembrane region" description="Helical">
    <location>
        <begin position="477"/>
        <end position="497"/>
    </location>
</feature>
<feature type="modified residue" description="Phosphotyrosine; by Tyr-kinases" evidence="3">
    <location>
        <position position="393"/>
    </location>
</feature>
<feature type="glycosylation site" description="N-linked (GlcNAc...) asparagine" evidence="2">
    <location>
        <position position="91"/>
    </location>
</feature>
<feature type="glycosylation site" description="N-linked (GlcNAc...) asparagine" evidence="4">
    <location>
        <position position="164"/>
    </location>
</feature>
<feature type="glycosylation site" description="N-linked (GlcNAc...) asparagine" evidence="2">
    <location>
        <position position="229"/>
    </location>
</feature>
<feature type="disulfide bond" evidence="4">
    <location>
        <begin position="151"/>
        <end position="165"/>
    </location>
</feature>
<feature type="helix" evidence="7">
    <location>
        <begin position="24"/>
        <end position="33"/>
    </location>
</feature>
<feature type="turn" evidence="7">
    <location>
        <begin position="34"/>
        <end position="37"/>
    </location>
</feature>
<feature type="strand" evidence="8">
    <location>
        <begin position="46"/>
        <end position="49"/>
    </location>
</feature>
<feature type="strand" evidence="7">
    <location>
        <begin position="52"/>
        <end position="67"/>
    </location>
</feature>
<feature type="turn" evidence="7">
    <location>
        <begin position="68"/>
        <end position="71"/>
    </location>
</feature>
<feature type="strand" evidence="7">
    <location>
        <begin position="72"/>
        <end position="89"/>
    </location>
</feature>
<feature type="helix" evidence="7">
    <location>
        <begin position="92"/>
        <end position="95"/>
    </location>
</feature>
<feature type="strand" evidence="7">
    <location>
        <begin position="101"/>
        <end position="103"/>
    </location>
</feature>
<feature type="turn" evidence="7">
    <location>
        <begin position="105"/>
        <end position="107"/>
    </location>
</feature>
<feature type="strand" evidence="7">
    <location>
        <begin position="113"/>
        <end position="115"/>
    </location>
</feature>
<feature type="strand" evidence="7">
    <location>
        <begin position="118"/>
        <end position="121"/>
    </location>
</feature>
<feature type="strand" evidence="7">
    <location>
        <begin position="131"/>
        <end position="133"/>
    </location>
</feature>
<feature type="strand" evidence="7">
    <location>
        <begin position="136"/>
        <end position="141"/>
    </location>
</feature>
<feature type="strand" evidence="7">
    <location>
        <begin position="144"/>
        <end position="150"/>
    </location>
</feature>
<feature type="turn" evidence="7">
    <location>
        <begin position="156"/>
        <end position="159"/>
    </location>
</feature>
<feature type="strand" evidence="7">
    <location>
        <begin position="162"/>
        <end position="171"/>
    </location>
</feature>
<feature type="turn" evidence="7">
    <location>
        <begin position="176"/>
        <end position="178"/>
    </location>
</feature>
<feature type="strand" evidence="7">
    <location>
        <begin position="179"/>
        <end position="183"/>
    </location>
</feature>
<feature type="strand" evidence="7">
    <location>
        <begin position="185"/>
        <end position="188"/>
    </location>
</feature>
<feature type="strand" evidence="7">
    <location>
        <begin position="191"/>
        <end position="194"/>
    </location>
</feature>
<feature type="strand" evidence="7">
    <location>
        <begin position="202"/>
        <end position="204"/>
    </location>
</feature>
<feature type="strand" evidence="7">
    <location>
        <begin position="209"/>
        <end position="215"/>
    </location>
</feature>
<feature type="strand" evidence="7">
    <location>
        <begin position="217"/>
        <end position="222"/>
    </location>
</feature>
<feature type="strand" evidence="10">
    <location>
        <begin position="228"/>
        <end position="230"/>
    </location>
</feature>
<feature type="strand" evidence="7">
    <location>
        <begin position="233"/>
        <end position="244"/>
    </location>
</feature>
<feature type="helix" evidence="7">
    <location>
        <begin position="247"/>
        <end position="266"/>
    </location>
</feature>
<feature type="helix" evidence="7">
    <location>
        <begin position="267"/>
        <end position="269"/>
    </location>
</feature>
<feature type="strand" evidence="9">
    <location>
        <begin position="272"/>
        <end position="274"/>
    </location>
</feature>
<feature type="helix" evidence="7">
    <location>
        <begin position="277"/>
        <end position="297"/>
    </location>
</feature>
<feature type="helix" evidence="7">
    <location>
        <begin position="308"/>
        <end position="334"/>
    </location>
</feature>
<feature type="turn" evidence="7">
    <location>
        <begin position="338"/>
        <end position="340"/>
    </location>
</feature>
<feature type="helix" evidence="7">
    <location>
        <begin position="345"/>
        <end position="359"/>
    </location>
</feature>
<feature type="helix" evidence="7">
    <location>
        <begin position="442"/>
        <end position="498"/>
    </location>
</feature>
<feature type="strand" evidence="7">
    <location>
        <begin position="504"/>
        <end position="509"/>
    </location>
</feature>
<feature type="strand" evidence="6">
    <location>
        <begin position="516"/>
        <end position="518"/>
    </location>
</feature>
<organism>
    <name type="scientific">Tetronarce californica</name>
    <name type="common">Pacific electric ray</name>
    <name type="synonym">Torpedo californica</name>
    <dbReference type="NCBI Taxonomy" id="7787"/>
    <lineage>
        <taxon>Eukaryota</taxon>
        <taxon>Metazoa</taxon>
        <taxon>Chordata</taxon>
        <taxon>Craniata</taxon>
        <taxon>Vertebrata</taxon>
        <taxon>Chondrichthyes</taxon>
        <taxon>Elasmobranchii</taxon>
        <taxon>Batoidea</taxon>
        <taxon>Torpediniformes</taxon>
        <taxon>Torpedinidae</taxon>
        <taxon>Tetronarce</taxon>
    </lineage>
</organism>
<evidence type="ECO:0000250" key="1">
    <source>
        <dbReference type="UniProtKB" id="P04759"/>
    </source>
</evidence>
<evidence type="ECO:0000255" key="2"/>
<evidence type="ECO:0000269" key="3">
    <source>
    </source>
</evidence>
<evidence type="ECO:0000269" key="4">
    <source>
    </source>
</evidence>
<evidence type="ECO:0000305" key="5"/>
<evidence type="ECO:0007829" key="6">
    <source>
        <dbReference type="PDB" id="6UWZ"/>
    </source>
</evidence>
<evidence type="ECO:0007829" key="7">
    <source>
        <dbReference type="PDB" id="7QL5"/>
    </source>
</evidence>
<evidence type="ECO:0007829" key="8">
    <source>
        <dbReference type="PDB" id="7QL6"/>
    </source>
</evidence>
<evidence type="ECO:0007829" key="9">
    <source>
        <dbReference type="PDB" id="7SMM"/>
    </source>
</evidence>
<evidence type="ECO:0007829" key="10">
    <source>
        <dbReference type="PDB" id="7SMQ"/>
    </source>
</evidence>
<gene>
    <name type="primary">chrnd</name>
</gene>
<keyword id="KW-0002">3D-structure</keyword>
<keyword id="KW-1003">Cell membrane</keyword>
<keyword id="KW-0903">Direct protein sequencing</keyword>
<keyword id="KW-1015">Disulfide bond</keyword>
<keyword id="KW-0325">Glycoprotein</keyword>
<keyword id="KW-0407">Ion channel</keyword>
<keyword id="KW-0406">Ion transport</keyword>
<keyword id="KW-1071">Ligand-gated ion channel</keyword>
<keyword id="KW-0472">Membrane</keyword>
<keyword id="KW-0597">Phosphoprotein</keyword>
<keyword id="KW-0628">Postsynaptic cell membrane</keyword>
<keyword id="KW-0675">Receptor</keyword>
<keyword id="KW-0732">Signal</keyword>
<keyword id="KW-0770">Synapse</keyword>
<keyword id="KW-0812">Transmembrane</keyword>
<keyword id="KW-1133">Transmembrane helix</keyword>
<keyword id="KW-0813">Transport</keyword>
<name>ACHD_TETCF</name>
<sequence length="522" mass="59891">MGNIHFVYLLISCLYYSGCSGVNEEERLINDLLIVNKYNKHVRPVKHNNEVVNIALSLTLSNLISLKETDETLTSNVWMDHAWYDHRLTWNASEYSDISILRLPPELVWIPDIVLQNNNDGQYHVAYFCNVLVRPNGYVTWLPPAIFRSSCPINVLYFPFDWQNCSLKFTALNYDANEITMDLMTDTIDGKDYPIEWIIIDPEAFTENGEWEIIHKPAKKNIYPDKFPNGTNYQDVTFYLIIRRKPLFYVINFITPCVLISFLASLAFYLPAESGEKMSTAISVLLAQAVFLLLTSQRLPETALAVPLIGKYLMFIMSLVTGVIVNCGIVLNFHFRTPSTHVLSTRVKQIFLEKLPRILHMSRADESEQPDWQNDLKLRRSSSVGYISKAQEYFNIKSRSELMFEKQSERHGLVPRVTPRIGFGNNNENIAASDQLHDEIKSGIDSTNYIVKQIKEKNAYDEEVGNWNLVGQTIDRLSMFIITPVMVLGTIFIFVMGNFNHPPAKPFEGDPFDYSSDHPRCA</sequence>
<accession>P02718</accession>
<reference key="1">
    <citation type="journal article" date="1983" name="Nature">
        <title>Primary structures of beta- and delta-subunit precursors of Torpedo californica acetylcholine receptor deduced from cDNA sequences.</title>
        <authorList>
            <person name="Noda M."/>
            <person name="Takahashi H."/>
            <person name="Tanabe T."/>
            <person name="Toyosato M."/>
            <person name="Kikyotani S."/>
            <person name="Hirose T."/>
            <person name="Asai M."/>
            <person name="Takashima H."/>
            <person name="Inayama S."/>
            <person name="Miyata T."/>
            <person name="Numa S."/>
        </authorList>
    </citation>
    <scope>NUCLEOTIDE SEQUENCE [MRNA]</scope>
</reference>
<reference key="2">
    <citation type="journal article" date="1989" name="Biochemistry">
        <title>Assessment of the number of free cysteines and isolation and identification of cystine-containing peptides from acetylcholine receptor.</title>
        <authorList>
            <person name="Kellaris K.V."/>
            <person name="Ware D.K."/>
            <person name="Smith S."/>
            <person name="Kyte J."/>
        </authorList>
    </citation>
    <scope>PROTEIN SEQUENCE OF 125-134 AND 139-145</scope>
    <scope>GLYCOSYLATION AT ASN-164</scope>
    <scope>DISULFIDE BOND</scope>
</reference>
<reference key="3">
    <citation type="journal article" date="1991" name="J. Biol. Chem.">
        <title>Determination of the tyrosine phosphorylation sites of the nicotinic acetylcholine receptor.</title>
        <authorList>
            <person name="Wagner K."/>
            <person name="Edson K."/>
            <person name="Heginbotham L."/>
            <person name="Post M."/>
            <person name="Huganir R.L."/>
            <person name="Czernik A.J."/>
        </authorList>
    </citation>
    <scope>PHOSPHORYLATION AT TYR-393</scope>
</reference>
<reference key="4">
    <citation type="journal article" date="1999" name="Nat. Struct. Biol.">
        <title>Structures of the M2 channel-lining segments from nicotinic acetylcholine and NMDA receptors by NMR spectroscopy.</title>
        <authorList>
            <person name="Opella S.J."/>
            <person name="Marassi F.M."/>
            <person name="Gesell J.J."/>
            <person name="Valente A.P."/>
            <person name="Kim Y."/>
            <person name="Oblatt-Montal M."/>
            <person name="Montal M."/>
        </authorList>
    </citation>
    <scope>STRUCTURE BY NMR OF 276-298</scope>
</reference>
<proteinExistence type="evidence at protein level"/>
<comment type="function">
    <text>After binding acetylcholine, the AChR responds by an extensive change in conformation that affects all subunits and leads to opening of an ion-conducting channel across the plasma membrane.</text>
</comment>
<comment type="catalytic activity">
    <reaction evidence="1">
        <text>K(+)(in) = K(+)(out)</text>
        <dbReference type="Rhea" id="RHEA:29463"/>
        <dbReference type="ChEBI" id="CHEBI:29103"/>
    </reaction>
</comment>
<comment type="catalytic activity">
    <reaction evidence="1">
        <text>Na(+)(in) = Na(+)(out)</text>
        <dbReference type="Rhea" id="RHEA:34963"/>
        <dbReference type="ChEBI" id="CHEBI:29101"/>
    </reaction>
</comment>
<comment type="subunit">
    <text>Pentamer of two alpha chains, and one each of the beta, delta, and gamma chains.</text>
</comment>
<comment type="subcellular location">
    <subcellularLocation>
        <location>Postsynaptic cell membrane</location>
        <topology>Multi-pass membrane protein</topology>
    </subcellularLocation>
    <subcellularLocation>
        <location>Cell membrane</location>
        <topology>Multi-pass membrane protein</topology>
    </subcellularLocation>
</comment>
<comment type="similarity">
    <text evidence="5">Belongs to the ligand-gated ion channel (TC 1.A.9) family. Acetylcholine receptor (TC 1.A.9.1) subfamily.</text>
</comment>